<feature type="chain" id="PRO_1000020504" description="Threonine--tRNA ligase">
    <location>
        <begin position="1"/>
        <end position="642"/>
    </location>
</feature>
<feature type="domain" description="TGS" evidence="2">
    <location>
        <begin position="1"/>
        <end position="61"/>
    </location>
</feature>
<feature type="region of interest" description="Catalytic" evidence="1">
    <location>
        <begin position="243"/>
        <end position="534"/>
    </location>
</feature>
<feature type="binding site" evidence="1">
    <location>
        <position position="334"/>
    </location>
    <ligand>
        <name>Zn(2+)</name>
        <dbReference type="ChEBI" id="CHEBI:29105"/>
    </ligand>
</feature>
<feature type="binding site" evidence="1">
    <location>
        <position position="385"/>
    </location>
    <ligand>
        <name>Zn(2+)</name>
        <dbReference type="ChEBI" id="CHEBI:29105"/>
    </ligand>
</feature>
<feature type="binding site" evidence="1">
    <location>
        <position position="511"/>
    </location>
    <ligand>
        <name>Zn(2+)</name>
        <dbReference type="ChEBI" id="CHEBI:29105"/>
    </ligand>
</feature>
<accession>Q082E1</accession>
<protein>
    <recommendedName>
        <fullName evidence="1">Threonine--tRNA ligase</fullName>
        <ecNumber evidence="1">6.1.1.3</ecNumber>
    </recommendedName>
    <alternativeName>
        <fullName evidence="1">Threonyl-tRNA synthetase</fullName>
        <shortName evidence="1">ThrRS</shortName>
    </alternativeName>
</protein>
<reference key="1">
    <citation type="submission" date="2006-08" db="EMBL/GenBank/DDBJ databases">
        <title>Complete sequence of Shewanella frigidimarina NCIMB 400.</title>
        <authorList>
            <consortium name="US DOE Joint Genome Institute"/>
            <person name="Copeland A."/>
            <person name="Lucas S."/>
            <person name="Lapidus A."/>
            <person name="Barry K."/>
            <person name="Detter J.C."/>
            <person name="Glavina del Rio T."/>
            <person name="Hammon N."/>
            <person name="Israni S."/>
            <person name="Dalin E."/>
            <person name="Tice H."/>
            <person name="Pitluck S."/>
            <person name="Fredrickson J.K."/>
            <person name="Kolker E."/>
            <person name="McCuel L.A."/>
            <person name="DiChristina T."/>
            <person name="Nealson K.H."/>
            <person name="Newman D."/>
            <person name="Tiedje J.M."/>
            <person name="Zhou J."/>
            <person name="Romine M.F."/>
            <person name="Culley D.E."/>
            <person name="Serres M."/>
            <person name="Chertkov O."/>
            <person name="Brettin T."/>
            <person name="Bruce D."/>
            <person name="Han C."/>
            <person name="Tapia R."/>
            <person name="Gilna P."/>
            <person name="Schmutz J."/>
            <person name="Larimer F."/>
            <person name="Land M."/>
            <person name="Hauser L."/>
            <person name="Kyrpides N."/>
            <person name="Mikhailova N."/>
            <person name="Richardson P."/>
        </authorList>
    </citation>
    <scope>NUCLEOTIDE SEQUENCE [LARGE SCALE GENOMIC DNA]</scope>
    <source>
        <strain>NCIMB 400</strain>
    </source>
</reference>
<name>SYT_SHEFN</name>
<organism>
    <name type="scientific">Shewanella frigidimarina (strain NCIMB 400)</name>
    <dbReference type="NCBI Taxonomy" id="318167"/>
    <lineage>
        <taxon>Bacteria</taxon>
        <taxon>Pseudomonadati</taxon>
        <taxon>Pseudomonadota</taxon>
        <taxon>Gammaproteobacteria</taxon>
        <taxon>Alteromonadales</taxon>
        <taxon>Shewanellaceae</taxon>
        <taxon>Shewanella</taxon>
    </lineage>
</organism>
<gene>
    <name evidence="1" type="primary">thrS</name>
    <name type="ordered locus">Sfri_2028</name>
</gene>
<keyword id="KW-0030">Aminoacyl-tRNA synthetase</keyword>
<keyword id="KW-0067">ATP-binding</keyword>
<keyword id="KW-0963">Cytoplasm</keyword>
<keyword id="KW-0436">Ligase</keyword>
<keyword id="KW-0479">Metal-binding</keyword>
<keyword id="KW-0547">Nucleotide-binding</keyword>
<keyword id="KW-0648">Protein biosynthesis</keyword>
<keyword id="KW-1185">Reference proteome</keyword>
<keyword id="KW-0694">RNA-binding</keyword>
<keyword id="KW-0820">tRNA-binding</keyword>
<keyword id="KW-0862">Zinc</keyword>
<dbReference type="EC" id="6.1.1.3" evidence="1"/>
<dbReference type="EMBL" id="CP000447">
    <property type="protein sequence ID" value="ABI71874.1"/>
    <property type="molecule type" value="Genomic_DNA"/>
</dbReference>
<dbReference type="RefSeq" id="WP_011637488.1">
    <property type="nucleotide sequence ID" value="NC_008345.1"/>
</dbReference>
<dbReference type="SMR" id="Q082E1"/>
<dbReference type="STRING" id="318167.Sfri_2028"/>
<dbReference type="KEGG" id="sfr:Sfri_2028"/>
<dbReference type="eggNOG" id="COG0441">
    <property type="taxonomic scope" value="Bacteria"/>
</dbReference>
<dbReference type="HOGENOM" id="CLU_008554_0_1_6"/>
<dbReference type="OrthoDB" id="9802304at2"/>
<dbReference type="Proteomes" id="UP000000684">
    <property type="component" value="Chromosome"/>
</dbReference>
<dbReference type="GO" id="GO:0005829">
    <property type="term" value="C:cytosol"/>
    <property type="evidence" value="ECO:0007669"/>
    <property type="project" value="TreeGrafter"/>
</dbReference>
<dbReference type="GO" id="GO:0005524">
    <property type="term" value="F:ATP binding"/>
    <property type="evidence" value="ECO:0007669"/>
    <property type="project" value="UniProtKB-UniRule"/>
</dbReference>
<dbReference type="GO" id="GO:0046872">
    <property type="term" value="F:metal ion binding"/>
    <property type="evidence" value="ECO:0007669"/>
    <property type="project" value="UniProtKB-KW"/>
</dbReference>
<dbReference type="GO" id="GO:0004829">
    <property type="term" value="F:threonine-tRNA ligase activity"/>
    <property type="evidence" value="ECO:0007669"/>
    <property type="project" value="UniProtKB-UniRule"/>
</dbReference>
<dbReference type="GO" id="GO:0000049">
    <property type="term" value="F:tRNA binding"/>
    <property type="evidence" value="ECO:0007669"/>
    <property type="project" value="UniProtKB-KW"/>
</dbReference>
<dbReference type="GO" id="GO:0006435">
    <property type="term" value="P:threonyl-tRNA aminoacylation"/>
    <property type="evidence" value="ECO:0007669"/>
    <property type="project" value="UniProtKB-UniRule"/>
</dbReference>
<dbReference type="CDD" id="cd01667">
    <property type="entry name" value="TGS_ThrRS"/>
    <property type="match status" value="1"/>
</dbReference>
<dbReference type="CDD" id="cd00860">
    <property type="entry name" value="ThrRS_anticodon"/>
    <property type="match status" value="1"/>
</dbReference>
<dbReference type="CDD" id="cd00771">
    <property type="entry name" value="ThrRS_core"/>
    <property type="match status" value="1"/>
</dbReference>
<dbReference type="FunFam" id="3.10.20.30:FF:000005">
    <property type="entry name" value="Threonine--tRNA ligase"/>
    <property type="match status" value="1"/>
</dbReference>
<dbReference type="FunFam" id="3.30.54.20:FF:000002">
    <property type="entry name" value="Threonine--tRNA ligase"/>
    <property type="match status" value="1"/>
</dbReference>
<dbReference type="FunFam" id="3.30.930.10:FF:000002">
    <property type="entry name" value="Threonine--tRNA ligase"/>
    <property type="match status" value="1"/>
</dbReference>
<dbReference type="FunFam" id="3.40.50.800:FF:000001">
    <property type="entry name" value="Threonine--tRNA ligase"/>
    <property type="match status" value="1"/>
</dbReference>
<dbReference type="FunFam" id="3.30.980.10:FF:000005">
    <property type="entry name" value="Threonyl-tRNA synthetase, mitochondrial"/>
    <property type="match status" value="1"/>
</dbReference>
<dbReference type="Gene3D" id="3.10.20.30">
    <property type="match status" value="1"/>
</dbReference>
<dbReference type="Gene3D" id="3.30.54.20">
    <property type="match status" value="1"/>
</dbReference>
<dbReference type="Gene3D" id="3.40.50.800">
    <property type="entry name" value="Anticodon-binding domain"/>
    <property type="match status" value="1"/>
</dbReference>
<dbReference type="Gene3D" id="3.30.930.10">
    <property type="entry name" value="Bira Bifunctional Protein, Domain 2"/>
    <property type="match status" value="1"/>
</dbReference>
<dbReference type="Gene3D" id="3.30.980.10">
    <property type="entry name" value="Threonyl-trna Synthetase, Chain A, domain 2"/>
    <property type="match status" value="1"/>
</dbReference>
<dbReference type="HAMAP" id="MF_00184">
    <property type="entry name" value="Thr_tRNA_synth"/>
    <property type="match status" value="1"/>
</dbReference>
<dbReference type="InterPro" id="IPR002314">
    <property type="entry name" value="aa-tRNA-synt_IIb"/>
</dbReference>
<dbReference type="InterPro" id="IPR006195">
    <property type="entry name" value="aa-tRNA-synth_II"/>
</dbReference>
<dbReference type="InterPro" id="IPR045864">
    <property type="entry name" value="aa-tRNA-synth_II/BPL/LPL"/>
</dbReference>
<dbReference type="InterPro" id="IPR004154">
    <property type="entry name" value="Anticodon-bd"/>
</dbReference>
<dbReference type="InterPro" id="IPR036621">
    <property type="entry name" value="Anticodon-bd_dom_sf"/>
</dbReference>
<dbReference type="InterPro" id="IPR012675">
    <property type="entry name" value="Beta-grasp_dom_sf"/>
</dbReference>
<dbReference type="InterPro" id="IPR004095">
    <property type="entry name" value="TGS"/>
</dbReference>
<dbReference type="InterPro" id="IPR012676">
    <property type="entry name" value="TGS-like"/>
</dbReference>
<dbReference type="InterPro" id="IPR002320">
    <property type="entry name" value="Thr-tRNA-ligase_IIa"/>
</dbReference>
<dbReference type="InterPro" id="IPR018163">
    <property type="entry name" value="Thr/Ala-tRNA-synth_IIc_edit"/>
</dbReference>
<dbReference type="InterPro" id="IPR047246">
    <property type="entry name" value="ThrRS_anticodon"/>
</dbReference>
<dbReference type="InterPro" id="IPR033728">
    <property type="entry name" value="ThrRS_core"/>
</dbReference>
<dbReference type="InterPro" id="IPR012947">
    <property type="entry name" value="tRNA_SAD"/>
</dbReference>
<dbReference type="NCBIfam" id="TIGR00418">
    <property type="entry name" value="thrS"/>
    <property type="match status" value="1"/>
</dbReference>
<dbReference type="PANTHER" id="PTHR11451:SF44">
    <property type="entry name" value="THREONINE--TRNA LIGASE, CHLOROPLASTIC_MITOCHONDRIAL 2"/>
    <property type="match status" value="1"/>
</dbReference>
<dbReference type="PANTHER" id="PTHR11451">
    <property type="entry name" value="THREONINE-TRNA LIGASE"/>
    <property type="match status" value="1"/>
</dbReference>
<dbReference type="Pfam" id="PF03129">
    <property type="entry name" value="HGTP_anticodon"/>
    <property type="match status" value="1"/>
</dbReference>
<dbReference type="Pfam" id="PF02824">
    <property type="entry name" value="TGS"/>
    <property type="match status" value="1"/>
</dbReference>
<dbReference type="Pfam" id="PF00587">
    <property type="entry name" value="tRNA-synt_2b"/>
    <property type="match status" value="1"/>
</dbReference>
<dbReference type="Pfam" id="PF07973">
    <property type="entry name" value="tRNA_SAD"/>
    <property type="match status" value="1"/>
</dbReference>
<dbReference type="PRINTS" id="PR01047">
    <property type="entry name" value="TRNASYNTHTHR"/>
</dbReference>
<dbReference type="SMART" id="SM00863">
    <property type="entry name" value="tRNA_SAD"/>
    <property type="match status" value="1"/>
</dbReference>
<dbReference type="SUPFAM" id="SSF52954">
    <property type="entry name" value="Class II aaRS ABD-related"/>
    <property type="match status" value="1"/>
</dbReference>
<dbReference type="SUPFAM" id="SSF55681">
    <property type="entry name" value="Class II aaRS and biotin synthetases"/>
    <property type="match status" value="1"/>
</dbReference>
<dbReference type="SUPFAM" id="SSF81271">
    <property type="entry name" value="TGS-like"/>
    <property type="match status" value="1"/>
</dbReference>
<dbReference type="SUPFAM" id="SSF55186">
    <property type="entry name" value="ThrRS/AlaRS common domain"/>
    <property type="match status" value="1"/>
</dbReference>
<dbReference type="PROSITE" id="PS50862">
    <property type="entry name" value="AA_TRNA_LIGASE_II"/>
    <property type="match status" value="1"/>
</dbReference>
<dbReference type="PROSITE" id="PS51880">
    <property type="entry name" value="TGS"/>
    <property type="match status" value="1"/>
</dbReference>
<proteinExistence type="inferred from homology"/>
<comment type="function">
    <text evidence="1">Catalyzes the attachment of threonine to tRNA(Thr) in a two-step reaction: L-threonine is first activated by ATP to form Thr-AMP and then transferred to the acceptor end of tRNA(Thr). Also edits incorrectly charged L-seryl-tRNA(Thr).</text>
</comment>
<comment type="catalytic activity">
    <reaction evidence="1">
        <text>tRNA(Thr) + L-threonine + ATP = L-threonyl-tRNA(Thr) + AMP + diphosphate + H(+)</text>
        <dbReference type="Rhea" id="RHEA:24624"/>
        <dbReference type="Rhea" id="RHEA-COMP:9670"/>
        <dbReference type="Rhea" id="RHEA-COMP:9704"/>
        <dbReference type="ChEBI" id="CHEBI:15378"/>
        <dbReference type="ChEBI" id="CHEBI:30616"/>
        <dbReference type="ChEBI" id="CHEBI:33019"/>
        <dbReference type="ChEBI" id="CHEBI:57926"/>
        <dbReference type="ChEBI" id="CHEBI:78442"/>
        <dbReference type="ChEBI" id="CHEBI:78534"/>
        <dbReference type="ChEBI" id="CHEBI:456215"/>
        <dbReference type="EC" id="6.1.1.3"/>
    </reaction>
</comment>
<comment type="cofactor">
    <cofactor evidence="1">
        <name>Zn(2+)</name>
        <dbReference type="ChEBI" id="CHEBI:29105"/>
    </cofactor>
    <text evidence="1">Binds 1 zinc ion per subunit.</text>
</comment>
<comment type="subunit">
    <text evidence="1">Homodimer.</text>
</comment>
<comment type="subcellular location">
    <subcellularLocation>
        <location evidence="1">Cytoplasm</location>
    </subcellularLocation>
</comment>
<comment type="similarity">
    <text evidence="1">Belongs to the class-II aminoacyl-tRNA synthetase family.</text>
</comment>
<sequence>MPIITLPDGSKREFANPVSTLDVALDIGPGLAKACIAGRVNGELKDATDLITADSELAIITAKDEEGVEILRHSCAHLLGHAIKQMWPETKMAIGPVIDNGFYYDIDLDHKLTHEDIEALEKRMLALAKTNYDVVKKVVSWQEARDAFDGRGEEYKIAILDENISKDATPALYHHEEYIDMCRGPHVPNMRFCQNFKLMSVAGAYWRGNSDNKMLQRVYGTAWADKKALKTHLVRLEEAAKRDHRKIGKQLDLYHMQEEAPGMVFWHNDGWSIFLELEKFIRQKLGQYTYQEVKGPLMMDRVLWERSGHWDKYAEAMFTTNSENREYAIKPMNCPGHVQIFNQGLKSYRDLPLRMAEFGCCHRNEPSGSLHGLMRVRGFTQDDAHVFCTDDQVQEEVSACIQMVYDTYATFGFDNIVVKLSTRPEKRIGDDDMWDRAEDALKQALANNNIKYEILPGEGAFYGPKIEFTLHDCLDRAWQCGTVQLDYALPTRLGATYVAEDNSRQTPVMIHRAILGSLERFIGILIEEYAGKFPTWLAPMQVVVMNITDKQADYVEEIVKFFKEQGIRASFDLRNEKIGFKIREHTLRRVPYLLVVGDQEMENKEVAVRTRDGIDLGKLKLEDFAAMIRQQISLRSLKLLEE</sequence>
<evidence type="ECO:0000255" key="1">
    <source>
        <dbReference type="HAMAP-Rule" id="MF_00184"/>
    </source>
</evidence>
<evidence type="ECO:0000255" key="2">
    <source>
        <dbReference type="PROSITE-ProRule" id="PRU01228"/>
    </source>
</evidence>